<sequence>MAKGEGHILAQNKKARLDYHIVETVEAGIVLTGTEIKSVRAARIQLKDGFAQIKNGEAWLVNVHIAPFEQGNIWNADPERTRKLLLKKREITHLANELKGTGMTLVPLKVYLKDGFAKVLIGLAKGKHDYDKRETIKRRDQERDIKKQMKHYNAR</sequence>
<proteinExistence type="inferred from homology"/>
<keyword id="KW-0963">Cytoplasm</keyword>
<keyword id="KW-0694">RNA-binding</keyword>
<protein>
    <recommendedName>
        <fullName evidence="1">SsrA-binding protein</fullName>
    </recommendedName>
    <alternativeName>
        <fullName evidence="1">Small protein B</fullName>
    </alternativeName>
</protein>
<reference key="1">
    <citation type="journal article" date="2002" name="Proc. Natl. Acad. Sci. U.S.A.">
        <title>Genome sequence and comparative microarray analysis of serotype M18 group A Streptococcus strains associated with acute rheumatic fever outbreaks.</title>
        <authorList>
            <person name="Smoot J.C."/>
            <person name="Barbian K.D."/>
            <person name="Van Gompel J.J."/>
            <person name="Smoot L.M."/>
            <person name="Chaussee M.S."/>
            <person name="Sylva G.L."/>
            <person name="Sturdevant D.E."/>
            <person name="Ricklefs S.M."/>
            <person name="Porcella S.F."/>
            <person name="Parkins L.D."/>
            <person name="Beres S.B."/>
            <person name="Campbell D.S."/>
            <person name="Smith T.M."/>
            <person name="Zhang Q."/>
            <person name="Kapur V."/>
            <person name="Daly J.A."/>
            <person name="Veasy L.G."/>
            <person name="Musser J.M."/>
        </authorList>
    </citation>
    <scope>NUCLEOTIDE SEQUENCE [LARGE SCALE GENOMIC DNA]</scope>
    <source>
        <strain>MGAS8232</strain>
    </source>
</reference>
<evidence type="ECO:0000255" key="1">
    <source>
        <dbReference type="HAMAP-Rule" id="MF_00023"/>
    </source>
</evidence>
<gene>
    <name evidence="1" type="primary">smpB</name>
    <name type="ordered locus">spyM18_0563</name>
</gene>
<name>SSRP_STRP8</name>
<comment type="function">
    <text evidence="1">Required for rescue of stalled ribosomes mediated by trans-translation. Binds to transfer-messenger RNA (tmRNA), required for stable association of tmRNA with ribosomes. tmRNA and SmpB together mimic tRNA shape, replacing the anticodon stem-loop with SmpB. tmRNA is encoded by the ssrA gene; the 2 termini fold to resemble tRNA(Ala) and it encodes a 'tag peptide', a short internal open reading frame. During trans-translation Ala-aminoacylated tmRNA acts like a tRNA, entering the A-site of stalled ribosomes, displacing the stalled mRNA. The ribosome then switches to translate the ORF on the tmRNA; the nascent peptide is terminated with the 'tag peptide' encoded by the tmRNA and targeted for degradation. The ribosome is freed to recommence translation, which seems to be the essential function of trans-translation.</text>
</comment>
<comment type="subcellular location">
    <subcellularLocation>
        <location evidence="1">Cytoplasm</location>
    </subcellularLocation>
    <text evidence="1">The tmRNA-SmpB complex associates with stalled 70S ribosomes.</text>
</comment>
<comment type="similarity">
    <text evidence="1">Belongs to the SmpB family.</text>
</comment>
<dbReference type="EMBL" id="AE009949">
    <property type="protein sequence ID" value="AAL97257.1"/>
    <property type="molecule type" value="Genomic_DNA"/>
</dbReference>
<dbReference type="RefSeq" id="WP_011017473.1">
    <property type="nucleotide sequence ID" value="NC_003485.1"/>
</dbReference>
<dbReference type="SMR" id="Q8P244"/>
<dbReference type="KEGG" id="spm:spyM18_0563"/>
<dbReference type="HOGENOM" id="CLU_108953_0_0_9"/>
<dbReference type="GO" id="GO:0005829">
    <property type="term" value="C:cytosol"/>
    <property type="evidence" value="ECO:0007669"/>
    <property type="project" value="TreeGrafter"/>
</dbReference>
<dbReference type="GO" id="GO:0003723">
    <property type="term" value="F:RNA binding"/>
    <property type="evidence" value="ECO:0007669"/>
    <property type="project" value="UniProtKB-UniRule"/>
</dbReference>
<dbReference type="GO" id="GO:0070929">
    <property type="term" value="P:trans-translation"/>
    <property type="evidence" value="ECO:0007669"/>
    <property type="project" value="UniProtKB-UniRule"/>
</dbReference>
<dbReference type="CDD" id="cd09294">
    <property type="entry name" value="SmpB"/>
    <property type="match status" value="1"/>
</dbReference>
<dbReference type="Gene3D" id="2.40.280.10">
    <property type="match status" value="1"/>
</dbReference>
<dbReference type="HAMAP" id="MF_00023">
    <property type="entry name" value="SmpB"/>
    <property type="match status" value="1"/>
</dbReference>
<dbReference type="InterPro" id="IPR023620">
    <property type="entry name" value="SmpB"/>
</dbReference>
<dbReference type="InterPro" id="IPR000037">
    <property type="entry name" value="SsrA-bd_prot"/>
</dbReference>
<dbReference type="InterPro" id="IPR020081">
    <property type="entry name" value="SsrA-bd_prot_CS"/>
</dbReference>
<dbReference type="NCBIfam" id="NF003843">
    <property type="entry name" value="PRK05422.1"/>
    <property type="match status" value="1"/>
</dbReference>
<dbReference type="NCBIfam" id="TIGR00086">
    <property type="entry name" value="smpB"/>
    <property type="match status" value="1"/>
</dbReference>
<dbReference type="PANTHER" id="PTHR30308:SF2">
    <property type="entry name" value="SSRA-BINDING PROTEIN"/>
    <property type="match status" value="1"/>
</dbReference>
<dbReference type="PANTHER" id="PTHR30308">
    <property type="entry name" value="TMRNA-BINDING COMPONENT OF TRANS-TRANSLATION TAGGING COMPLEX"/>
    <property type="match status" value="1"/>
</dbReference>
<dbReference type="Pfam" id="PF01668">
    <property type="entry name" value="SmpB"/>
    <property type="match status" value="1"/>
</dbReference>
<dbReference type="SUPFAM" id="SSF74982">
    <property type="entry name" value="Small protein B (SmpB)"/>
    <property type="match status" value="1"/>
</dbReference>
<dbReference type="PROSITE" id="PS01317">
    <property type="entry name" value="SSRP"/>
    <property type="match status" value="1"/>
</dbReference>
<accession>Q8P244</accession>
<organism>
    <name type="scientific">Streptococcus pyogenes serotype M18 (strain MGAS8232)</name>
    <dbReference type="NCBI Taxonomy" id="186103"/>
    <lineage>
        <taxon>Bacteria</taxon>
        <taxon>Bacillati</taxon>
        <taxon>Bacillota</taxon>
        <taxon>Bacilli</taxon>
        <taxon>Lactobacillales</taxon>
        <taxon>Streptococcaceae</taxon>
        <taxon>Streptococcus</taxon>
    </lineage>
</organism>
<feature type="chain" id="PRO_0000103046" description="SsrA-binding protein">
    <location>
        <begin position="1"/>
        <end position="155"/>
    </location>
</feature>